<sequence length="275" mass="28694">MAGVSSESLTAALVALEAKLPFASLQLAKELFGILGTVDSSAGLRRALTDPSRSGDEKSALVKQLFGGKVSTDAAEIASGLAGSRWASARDIGDALETLAASVVIAVAENKSAVSASGITGLEALENDLFAFNHAVDSSHEVQRALSEPQASPAAKIALAEKLVPNASEEAKVLIGQAVSHPRGLKATNLVRRFAELAAKRQQRWIATVSVTRPLTESQTGRLQAGLNALYGRELKINMNVDPALIGGIRIQVGDEVVDASLLTRLGQLQRQLAG</sequence>
<name>ATPD_ARTS2</name>
<proteinExistence type="inferred from homology"/>
<keyword id="KW-0066">ATP synthesis</keyword>
<keyword id="KW-1003">Cell membrane</keyword>
<keyword id="KW-0139">CF(1)</keyword>
<keyword id="KW-0375">Hydrogen ion transport</keyword>
<keyword id="KW-0406">Ion transport</keyword>
<keyword id="KW-0472">Membrane</keyword>
<keyword id="KW-1185">Reference proteome</keyword>
<keyword id="KW-0813">Transport</keyword>
<dbReference type="EMBL" id="CP000454">
    <property type="protein sequence ID" value="ABK03987.1"/>
    <property type="molecule type" value="Genomic_DNA"/>
</dbReference>
<dbReference type="RefSeq" id="WP_011692449.1">
    <property type="nucleotide sequence ID" value="NC_008541.1"/>
</dbReference>
<dbReference type="SMR" id="A0JY67"/>
<dbReference type="STRING" id="290399.Arth_2608"/>
<dbReference type="KEGG" id="art:Arth_2608"/>
<dbReference type="eggNOG" id="COG0712">
    <property type="taxonomic scope" value="Bacteria"/>
</dbReference>
<dbReference type="HOGENOM" id="CLU_088880_0_0_11"/>
<dbReference type="OrthoDB" id="5242917at2"/>
<dbReference type="Proteomes" id="UP000000754">
    <property type="component" value="Chromosome"/>
</dbReference>
<dbReference type="GO" id="GO:0005886">
    <property type="term" value="C:plasma membrane"/>
    <property type="evidence" value="ECO:0007669"/>
    <property type="project" value="UniProtKB-SubCell"/>
</dbReference>
<dbReference type="GO" id="GO:0045259">
    <property type="term" value="C:proton-transporting ATP synthase complex"/>
    <property type="evidence" value="ECO:0007669"/>
    <property type="project" value="UniProtKB-KW"/>
</dbReference>
<dbReference type="GO" id="GO:0046933">
    <property type="term" value="F:proton-transporting ATP synthase activity, rotational mechanism"/>
    <property type="evidence" value="ECO:0007669"/>
    <property type="project" value="UniProtKB-UniRule"/>
</dbReference>
<dbReference type="HAMAP" id="MF_01416">
    <property type="entry name" value="ATP_synth_delta_bact"/>
    <property type="match status" value="1"/>
</dbReference>
<dbReference type="InterPro" id="IPR020781">
    <property type="entry name" value="ATPase_OSCP/d_CS"/>
</dbReference>
<dbReference type="InterPro" id="IPR000711">
    <property type="entry name" value="ATPase_OSCP/dsu"/>
</dbReference>
<dbReference type="NCBIfam" id="TIGR01145">
    <property type="entry name" value="ATP_synt_delta"/>
    <property type="match status" value="1"/>
</dbReference>
<dbReference type="NCBIfam" id="NF009967">
    <property type="entry name" value="PRK13430.1"/>
    <property type="match status" value="1"/>
</dbReference>
<dbReference type="PANTHER" id="PTHR11910">
    <property type="entry name" value="ATP SYNTHASE DELTA CHAIN"/>
    <property type="match status" value="1"/>
</dbReference>
<dbReference type="Pfam" id="PF00213">
    <property type="entry name" value="OSCP"/>
    <property type="match status" value="1"/>
</dbReference>
<dbReference type="PRINTS" id="PR00125">
    <property type="entry name" value="ATPASEDELTA"/>
</dbReference>
<dbReference type="PROSITE" id="PS00389">
    <property type="entry name" value="ATPASE_DELTA"/>
    <property type="match status" value="1"/>
</dbReference>
<feature type="chain" id="PRO_0000382058" description="ATP synthase subunit delta">
    <location>
        <begin position="1"/>
        <end position="275"/>
    </location>
</feature>
<organism>
    <name type="scientific">Arthrobacter sp. (strain FB24)</name>
    <dbReference type="NCBI Taxonomy" id="290399"/>
    <lineage>
        <taxon>Bacteria</taxon>
        <taxon>Bacillati</taxon>
        <taxon>Actinomycetota</taxon>
        <taxon>Actinomycetes</taxon>
        <taxon>Micrococcales</taxon>
        <taxon>Micrococcaceae</taxon>
        <taxon>Arthrobacter</taxon>
    </lineage>
</organism>
<reference key="1">
    <citation type="journal article" date="2013" name="Stand. Genomic Sci.">
        <title>Complete genome sequence of Arthrobacter sp. strain FB24.</title>
        <authorList>
            <person name="Nakatsu C.H."/>
            <person name="Barabote R."/>
            <person name="Thompson S."/>
            <person name="Bruce D."/>
            <person name="Detter C."/>
            <person name="Brettin T."/>
            <person name="Han C."/>
            <person name="Beasley F."/>
            <person name="Chen W."/>
            <person name="Konopka A."/>
            <person name="Xie G."/>
        </authorList>
    </citation>
    <scope>NUCLEOTIDE SEQUENCE [LARGE SCALE GENOMIC DNA]</scope>
    <source>
        <strain>FB24</strain>
    </source>
</reference>
<gene>
    <name evidence="1" type="primary">atpH</name>
    <name type="ordered locus">Arth_2608</name>
</gene>
<accession>A0JY67</accession>
<evidence type="ECO:0000255" key="1">
    <source>
        <dbReference type="HAMAP-Rule" id="MF_01416"/>
    </source>
</evidence>
<protein>
    <recommendedName>
        <fullName evidence="1">ATP synthase subunit delta</fullName>
    </recommendedName>
    <alternativeName>
        <fullName evidence="1">ATP synthase F(1) sector subunit delta</fullName>
    </alternativeName>
    <alternativeName>
        <fullName evidence="1">F-type ATPase subunit delta</fullName>
        <shortName evidence="1">F-ATPase subunit delta</shortName>
    </alternativeName>
</protein>
<comment type="function">
    <text evidence="1">F(1)F(0) ATP synthase produces ATP from ADP in the presence of a proton or sodium gradient. F-type ATPases consist of two structural domains, F(1) containing the extramembraneous catalytic core and F(0) containing the membrane proton channel, linked together by a central stalk and a peripheral stalk. During catalysis, ATP synthesis in the catalytic domain of F(1) is coupled via a rotary mechanism of the central stalk subunits to proton translocation.</text>
</comment>
<comment type="function">
    <text evidence="1">This protein is part of the stalk that links CF(0) to CF(1). It either transmits conformational changes from CF(0) to CF(1) or is implicated in proton conduction.</text>
</comment>
<comment type="subunit">
    <text evidence="1">F-type ATPases have 2 components, F(1) - the catalytic core - and F(0) - the membrane proton channel. F(1) has five subunits: alpha(3), beta(3), gamma(1), delta(1), epsilon(1). F(0) has three main subunits: a(1), b(2) and c(10-14). The alpha and beta chains form an alternating ring which encloses part of the gamma chain. F(1) is attached to F(0) by a central stalk formed by the gamma and epsilon chains, while a peripheral stalk is formed by the delta and b chains.</text>
</comment>
<comment type="subcellular location">
    <subcellularLocation>
        <location evidence="1">Cell membrane</location>
        <topology evidence="1">Peripheral membrane protein</topology>
    </subcellularLocation>
</comment>
<comment type="similarity">
    <text evidence="1">Belongs to the ATPase delta chain family.</text>
</comment>